<keyword id="KW-0162">Chylomicron</keyword>
<keyword id="KW-0967">Endosome</keyword>
<keyword id="KW-0272">Extracellular matrix</keyword>
<keyword id="KW-0325">Glycoprotein</keyword>
<keyword id="KW-0345">HDL</keyword>
<keyword id="KW-0358">Heparin-binding</keyword>
<keyword id="KW-0445">Lipid transport</keyword>
<keyword id="KW-0446">Lipid-binding</keyword>
<keyword id="KW-0558">Oxidation</keyword>
<keyword id="KW-0597">Phosphoprotein</keyword>
<keyword id="KW-1185">Reference proteome</keyword>
<keyword id="KW-0677">Repeat</keyword>
<keyword id="KW-0964">Secreted</keyword>
<keyword id="KW-0732">Signal</keyword>
<keyword id="KW-0813">Transport</keyword>
<keyword id="KW-0850">VLDL</keyword>
<name>APOE_HETGA</name>
<comment type="function">
    <text evidence="1">APOE is an apolipoprotein, a protein associating with lipid particles, that mainly functions in lipoprotein-mediated lipid transport between organs via the plasma and interstitial fluids. APOE is a core component of plasma lipoproteins and is involved in their production, conversion and clearance. Apolipoproteins are amphipathic molecules that interact both with lipids of the lipoprotein particle core and the aqueous environment of the plasma. As such, APOE associates with chylomicrons, chylomicron remnants, very low density lipoproteins (VLDL) and intermediate density lipoproteins (IDL) but shows a preferential binding to high-density lipoproteins (HDL). It also binds a wide range of cellular receptors including the LDL receptor/LDLR and the very low-density lipoprotein receptor/VLDLR that mediate the cellular uptake of the APOE-containing lipoprotein particles. Finally, APOE also has a heparin-binding activity and binds heparan-sulfate proteoglycans on the surface of cells, a property that supports the capture and the receptor-mediated uptake of APOE-containing lipoproteins by cells.</text>
</comment>
<comment type="subunit">
    <text evidence="1">Homotetramer. May interact with ABCA1; functionally associated with ABCA1 in the biogenesis of HDLs. May interact with APP/A4 amyloid-beta peptide; the interaction is extremely stable in vitro but its physiological significance is unclear. May interact with MAPT. May interact with MAP2. In the cerebrospinal fluid, interacts with secreted SORL1. Interacts with PMEL; this allows the loading of PMEL luminal fragment on ILVs to induce fibril nucleation.</text>
</comment>
<comment type="subcellular location">
    <subcellularLocation>
        <location evidence="1">Secreted</location>
    </subcellularLocation>
    <subcellularLocation>
        <location evidence="1">Secreted</location>
        <location evidence="1">Extracellular space</location>
    </subcellularLocation>
    <subcellularLocation>
        <location evidence="1">Secreted</location>
        <location evidence="1">Extracellular space</location>
        <location evidence="1">Extracellular matrix</location>
    </subcellularLocation>
    <subcellularLocation>
        <location evidence="1">Extracellular vesicle</location>
    </subcellularLocation>
    <subcellularLocation>
        <location evidence="1">Endosome</location>
        <location evidence="1">Multivesicular body</location>
    </subcellularLocation>
    <text evidence="1">In the plasma, APOE is associated with chylomicrons, chylomicrons remnants, VLDL, LDL and HDL lipoproteins. Lipid poor oligomeric APOE is associated with the extracellular matrix in a calcium- and heparan-sulfate proteoglycans-dependent manner. Lipidation induces the release from the extracellular matrix. Colocalizes with CD63 and PMEL at exosomes and in intraluminal vesicles within multivesicular endosomes.</text>
</comment>
<comment type="PTM">
    <text evidence="1">APOE exists as multiple glycosylated and sialylated glycoforms within cells and in plasma. The extent of glycosylation and sialylation are tissue and context specific.</text>
</comment>
<comment type="PTM">
    <text evidence="1">Glycated in plasma VLDL.</text>
</comment>
<comment type="PTM">
    <text evidence="1">Phosphorylated by FAM20C in the extracellular medium.</text>
</comment>
<comment type="similarity">
    <text evidence="3">Belongs to the apolipoprotein A1/A4/E family.</text>
</comment>
<evidence type="ECO:0000250" key="1">
    <source>
        <dbReference type="UniProtKB" id="P02649"/>
    </source>
</evidence>
<evidence type="ECO:0000255" key="2"/>
<evidence type="ECO:0000305" key="3"/>
<proteinExistence type="evidence at protein level"/>
<accession>G5CBM7</accession>
<dbReference type="EMBL" id="KM486685">
    <property type="protein sequence ID" value="AIZ08970.1"/>
    <property type="molecule type" value="mRNA"/>
</dbReference>
<dbReference type="EMBL" id="JH204773">
    <property type="protein sequence ID" value="EHB18938.1"/>
    <property type="molecule type" value="Genomic_DNA"/>
</dbReference>
<dbReference type="RefSeq" id="NP_001297225.1">
    <property type="nucleotide sequence ID" value="NM_001310296.1"/>
</dbReference>
<dbReference type="RefSeq" id="XP_004873198.1">
    <property type="nucleotide sequence ID" value="XM_004873141.2"/>
</dbReference>
<dbReference type="SMR" id="G5CBM7"/>
<dbReference type="FunCoup" id="G5CBM7">
    <property type="interactions" value="193"/>
</dbReference>
<dbReference type="STRING" id="10181.G5CBM7"/>
<dbReference type="GeneID" id="101717206"/>
<dbReference type="KEGG" id="hgl:101717206"/>
<dbReference type="CTD" id="348"/>
<dbReference type="eggNOG" id="ENOG502QVD6">
    <property type="taxonomic scope" value="Eukaryota"/>
</dbReference>
<dbReference type="InParanoid" id="G5CBM7"/>
<dbReference type="OMA" id="GHMTDAR"/>
<dbReference type="OrthoDB" id="9048614at2759"/>
<dbReference type="Proteomes" id="UP000006813">
    <property type="component" value="Unassembled WGS sequence"/>
</dbReference>
<dbReference type="Proteomes" id="UP000694906">
    <property type="component" value="Unplaced"/>
</dbReference>
<dbReference type="GO" id="GO:0042627">
    <property type="term" value="C:chylomicron"/>
    <property type="evidence" value="ECO:0007669"/>
    <property type="project" value="UniProtKB-KW"/>
</dbReference>
<dbReference type="GO" id="GO:0070062">
    <property type="term" value="C:extracellular exosome"/>
    <property type="evidence" value="ECO:0000250"/>
    <property type="project" value="UniProtKB"/>
</dbReference>
<dbReference type="GO" id="GO:0034364">
    <property type="term" value="C:high-density lipoprotein particle"/>
    <property type="evidence" value="ECO:0007669"/>
    <property type="project" value="UniProtKB-KW"/>
</dbReference>
<dbReference type="GO" id="GO:0034362">
    <property type="term" value="C:low-density lipoprotein particle"/>
    <property type="evidence" value="ECO:0007669"/>
    <property type="project" value="TreeGrafter"/>
</dbReference>
<dbReference type="GO" id="GO:0097487">
    <property type="term" value="C:multivesicular body, internal vesicle"/>
    <property type="evidence" value="ECO:0000250"/>
    <property type="project" value="UniProtKB"/>
</dbReference>
<dbReference type="GO" id="GO:0034361">
    <property type="term" value="C:very-low-density lipoprotein particle"/>
    <property type="evidence" value="ECO:0007669"/>
    <property type="project" value="UniProtKB-KW"/>
</dbReference>
<dbReference type="GO" id="GO:0120020">
    <property type="term" value="F:cholesterol transfer activity"/>
    <property type="evidence" value="ECO:0007669"/>
    <property type="project" value="TreeGrafter"/>
</dbReference>
<dbReference type="GO" id="GO:0008201">
    <property type="term" value="F:heparin binding"/>
    <property type="evidence" value="ECO:0007669"/>
    <property type="project" value="UniProtKB-KW"/>
</dbReference>
<dbReference type="GO" id="GO:0060228">
    <property type="term" value="F:phosphatidylcholine-sterol O-acyltransferase activator activity"/>
    <property type="evidence" value="ECO:0007669"/>
    <property type="project" value="TreeGrafter"/>
</dbReference>
<dbReference type="GO" id="GO:0005543">
    <property type="term" value="F:phospholipid binding"/>
    <property type="evidence" value="ECO:0007669"/>
    <property type="project" value="TreeGrafter"/>
</dbReference>
<dbReference type="GO" id="GO:0055090">
    <property type="term" value="P:acylglycerol homeostasis"/>
    <property type="evidence" value="ECO:0007669"/>
    <property type="project" value="TreeGrafter"/>
</dbReference>
<dbReference type="GO" id="GO:0033344">
    <property type="term" value="P:cholesterol efflux"/>
    <property type="evidence" value="ECO:0007669"/>
    <property type="project" value="TreeGrafter"/>
</dbReference>
<dbReference type="GO" id="GO:0008203">
    <property type="term" value="P:cholesterol metabolic process"/>
    <property type="evidence" value="ECO:0007669"/>
    <property type="project" value="TreeGrafter"/>
</dbReference>
<dbReference type="GO" id="GO:0042157">
    <property type="term" value="P:lipoprotein metabolic process"/>
    <property type="evidence" value="ECO:0007669"/>
    <property type="project" value="InterPro"/>
</dbReference>
<dbReference type="GO" id="GO:0032438">
    <property type="term" value="P:melanosome organization"/>
    <property type="evidence" value="ECO:0000250"/>
    <property type="project" value="UniProtKB"/>
</dbReference>
<dbReference type="GO" id="GO:0033700">
    <property type="term" value="P:phospholipid efflux"/>
    <property type="evidence" value="ECO:0007669"/>
    <property type="project" value="TreeGrafter"/>
</dbReference>
<dbReference type="FunFam" id="1.20.120.20:FF:000002">
    <property type="entry name" value="Apolipoprotein E"/>
    <property type="match status" value="1"/>
</dbReference>
<dbReference type="FunFam" id="1.20.120.20:FF:000003">
    <property type="entry name" value="Apolipoprotein E"/>
    <property type="match status" value="1"/>
</dbReference>
<dbReference type="Gene3D" id="1.20.120.20">
    <property type="entry name" value="Apolipoprotein"/>
    <property type="match status" value="2"/>
</dbReference>
<dbReference type="InterPro" id="IPR000074">
    <property type="entry name" value="ApoA_E"/>
</dbReference>
<dbReference type="InterPro" id="IPR050163">
    <property type="entry name" value="Apolipoprotein_A1/A4/E"/>
</dbReference>
<dbReference type="PANTHER" id="PTHR18976">
    <property type="entry name" value="APOLIPOPROTEIN"/>
    <property type="match status" value="1"/>
</dbReference>
<dbReference type="PANTHER" id="PTHR18976:SF2">
    <property type="entry name" value="APOLIPOPROTEIN E"/>
    <property type="match status" value="1"/>
</dbReference>
<dbReference type="Pfam" id="PF01442">
    <property type="entry name" value="Apolipoprotein"/>
    <property type="match status" value="1"/>
</dbReference>
<dbReference type="SUPFAM" id="SSF58113">
    <property type="entry name" value="Apolipoprotein A-I"/>
    <property type="match status" value="1"/>
</dbReference>
<protein>
    <recommendedName>
        <fullName>Apolipoprotein E</fullName>
        <shortName>Apo-E</shortName>
    </recommendedName>
</protein>
<sequence>MKALWAVLVVTLLAGCRADVQPELEMQEPALWQSGQPWELALGRFWDYLRWVQTLSDQVQEELLNSQVTQELTVLMEDTMKEVKAYKNELEEELGPVAEDTKARLSKELQGAQARLRADMEEVRNRLAHYSEEMQVMLGQSPDELRARLGSHLRKLRKRLLRDAEDLQKRLAVYKAGAREGAERGVSAIRERLGSLVEQSRVRAALTGQPLRERAQAWGERLRGRLEEVGGRARDRLDEVREQMEEVRAKVEEQAEAFQARLKGWFEPMMEDMRRQWADLIEKVQLAVGASTPVPSEDH</sequence>
<reference key="1">
    <citation type="journal article" date="2016" name="BMC Genomics">
        <title>FRAMA: from RNA-seq data to annotated mRNA assemblies.</title>
        <authorList>
            <person name="Bens M."/>
            <person name="Sahm A."/>
            <person name="Groth M."/>
            <person name="Jahn N."/>
            <person name="Morhart M."/>
            <person name="Holtze S."/>
            <person name="Hildebrandt T.B."/>
            <person name="Platzer M."/>
            <person name="Szafranski K."/>
        </authorList>
    </citation>
    <scope>NUCLEOTIDE SEQUENCE [MRNA]</scope>
    <source>
        <tissue>Liver</tissue>
    </source>
</reference>
<reference key="2">
    <citation type="journal article" date="2011" name="Nature">
        <title>Genome sequencing reveals insights into physiology and longevity of the naked mole rat.</title>
        <authorList>
            <person name="Kim E.B."/>
            <person name="Fang X."/>
            <person name="Fushan A.A."/>
            <person name="Huang Z."/>
            <person name="Lobanov A.V."/>
            <person name="Han L."/>
            <person name="Marino S.M."/>
            <person name="Sun X."/>
            <person name="Turanov A.A."/>
            <person name="Yang P."/>
            <person name="Yim S.H."/>
            <person name="Zhao X."/>
            <person name="Kasaikina M.V."/>
            <person name="Stoletzki N."/>
            <person name="Peng C."/>
            <person name="Polak P."/>
            <person name="Xiong Z."/>
            <person name="Kiezun A."/>
            <person name="Zhu Y."/>
            <person name="Chen Y."/>
            <person name="Kryukov G.V."/>
            <person name="Zhang Q."/>
            <person name="Peshkin L."/>
            <person name="Yang L."/>
            <person name="Bronson R.T."/>
            <person name="Buffenstein R."/>
            <person name="Wang B."/>
            <person name="Han C."/>
            <person name="Li Q."/>
            <person name="Chen L."/>
            <person name="Zhao W."/>
            <person name="Sunyaev S.R."/>
            <person name="Park T.J."/>
            <person name="Zhang G."/>
            <person name="Wang J."/>
            <person name="Gladyshev V.N."/>
        </authorList>
    </citation>
    <scope>NUCLEOTIDE SEQUENCE [LARGE SCALE GENOMIC DNA]</scope>
</reference>
<reference key="3">
    <citation type="journal article" date="2021" name="Lipids">
        <title>Naked Mole-Rat, a Rodent with an Apolipoprotein A-I Dimer.</title>
        <authorList>
            <person name="Puppione D.L."/>
            <person name="Tran D.P."/>
            <person name="Zenaidee M.A."/>
            <person name="Charugundla S."/>
            <person name="Whitelegge J.P."/>
            <person name="Buffenstein R."/>
        </authorList>
    </citation>
    <scope>IDENTIFICATION BY MASS SPECTROMETRY</scope>
</reference>
<feature type="signal peptide" evidence="2">
    <location>
        <begin position="1"/>
        <end position="18"/>
    </location>
</feature>
<feature type="chain" id="PRO_5007914983" description="Apolipoprotein E">
    <location>
        <begin position="19"/>
        <end position="299"/>
    </location>
</feature>
<feature type="repeat" description="1">
    <location>
        <begin position="74"/>
        <end position="95"/>
    </location>
</feature>
<feature type="repeat" description="2">
    <location>
        <begin position="96"/>
        <end position="117"/>
    </location>
</feature>
<feature type="repeat" description="3">
    <location>
        <begin position="118"/>
        <end position="139"/>
    </location>
</feature>
<feature type="repeat" description="4">
    <location>
        <begin position="140"/>
        <end position="161"/>
    </location>
</feature>
<feature type="repeat" description="5">
    <location>
        <begin position="162"/>
        <end position="183"/>
    </location>
</feature>
<feature type="repeat" description="6">
    <location>
        <begin position="184"/>
        <end position="205"/>
    </location>
</feature>
<feature type="repeat" description="7">
    <location>
        <begin position="206"/>
        <end position="223"/>
    </location>
</feature>
<feature type="repeat" description="8">
    <location>
        <begin position="224"/>
        <end position="245"/>
    </location>
</feature>
<feature type="region of interest" description="8 X 22 AA approximate tandem repeats">
    <location>
        <begin position="74"/>
        <end position="245"/>
    </location>
</feature>
<feature type="region of interest" description="LDL and other lipoprotein receptors binding" evidence="1">
    <location>
        <begin position="152"/>
        <end position="162"/>
    </location>
</feature>
<feature type="region of interest" description="Lipid-binding and lipoprotein association" evidence="1">
    <location>
        <begin position="204"/>
        <end position="273"/>
    </location>
</feature>
<feature type="region of interest" description="Specificity for association with VLDL" evidence="1">
    <location>
        <begin position="261"/>
        <end position="273"/>
    </location>
</feature>
<feature type="binding site" evidence="1">
    <location>
        <begin position="156"/>
        <end position="159"/>
    </location>
    <ligand>
        <name>heparin</name>
        <dbReference type="ChEBI" id="CHEBI:28304"/>
    </ligand>
</feature>
<feature type="binding site" evidence="1">
    <location>
        <begin position="219"/>
        <end position="226"/>
    </location>
    <ligand>
        <name>heparin</name>
        <dbReference type="ChEBI" id="CHEBI:28304"/>
    </ligand>
</feature>
<organism>
    <name type="scientific">Heterocephalus glaber</name>
    <name type="common">Naked mole rat</name>
    <dbReference type="NCBI Taxonomy" id="10181"/>
    <lineage>
        <taxon>Eukaryota</taxon>
        <taxon>Metazoa</taxon>
        <taxon>Chordata</taxon>
        <taxon>Craniata</taxon>
        <taxon>Vertebrata</taxon>
        <taxon>Euteleostomi</taxon>
        <taxon>Mammalia</taxon>
        <taxon>Eutheria</taxon>
        <taxon>Euarchontoglires</taxon>
        <taxon>Glires</taxon>
        <taxon>Rodentia</taxon>
        <taxon>Hystricomorpha</taxon>
        <taxon>Bathyergidae</taxon>
        <taxon>Heterocephalus</taxon>
    </lineage>
</organism>
<gene>
    <name type="primary">APOE</name>
</gene>